<accession>P46771</accession>
<comment type="function">
    <text evidence="1">Required for the assembly and/or stability of the 40S ribosomal subunit. Required for the processing of the 20S rRNA-precursor to mature 18S rRNA in a late step of the maturation of 40S ribosomal subunits (By similarity).</text>
</comment>
<comment type="subunit">
    <text evidence="1">Component of the small ribosomal subunit. Mature ribosomes consist of a small (40S) and a large (60S) subunit. The 40S subunit contains about 33 different proteins and 1 molecule of RNA (18S). The 60S subunit contains about 49 different proteins and 3 molecules of RNA (28S, 5.8S and 5S). Interacts with ribosomal protein S21 (By similarity).</text>
</comment>
<comment type="subcellular location">
    <subcellularLocation>
        <location>Cytoplasm</location>
    </subcellularLocation>
</comment>
<comment type="similarity">
    <text evidence="3">Belongs to the universal ribosomal protein uS2 family.</text>
</comment>
<name>RSSA_STRPU</name>
<organism>
    <name type="scientific">Strongylocentrotus purpuratus</name>
    <name type="common">Purple sea urchin</name>
    <dbReference type="NCBI Taxonomy" id="7668"/>
    <lineage>
        <taxon>Eukaryota</taxon>
        <taxon>Metazoa</taxon>
        <taxon>Echinodermata</taxon>
        <taxon>Eleutherozoa</taxon>
        <taxon>Echinozoa</taxon>
        <taxon>Echinoidea</taxon>
        <taxon>Euechinoidea</taxon>
        <taxon>Echinacea</taxon>
        <taxon>Camarodonta</taxon>
        <taxon>Echinidea</taxon>
        <taxon>Strongylocentrotidae</taxon>
        <taxon>Strongylocentrotus</taxon>
    </lineage>
</organism>
<dbReference type="EMBL" id="U02369">
    <property type="protein sequence ID" value="AAA90976.1"/>
    <property type="molecule type" value="mRNA"/>
</dbReference>
<dbReference type="SMR" id="P46771"/>
<dbReference type="FunCoup" id="P46771">
    <property type="interactions" value="2042"/>
</dbReference>
<dbReference type="STRING" id="7668.P46771"/>
<dbReference type="eggNOG" id="KOG0830">
    <property type="taxonomic scope" value="Eukaryota"/>
</dbReference>
<dbReference type="HOGENOM" id="CLU_1536362_0_0_1"/>
<dbReference type="InParanoid" id="P46771"/>
<dbReference type="Proteomes" id="UP000007110">
    <property type="component" value="Unassembled WGS sequence"/>
</dbReference>
<dbReference type="GO" id="GO:0022627">
    <property type="term" value="C:cytosolic small ribosomal subunit"/>
    <property type="evidence" value="ECO:0000318"/>
    <property type="project" value="GO_Central"/>
</dbReference>
<dbReference type="GO" id="GO:0003735">
    <property type="term" value="F:structural constituent of ribosome"/>
    <property type="evidence" value="ECO:0000318"/>
    <property type="project" value="GO_Central"/>
</dbReference>
<dbReference type="GO" id="GO:0002181">
    <property type="term" value="P:cytoplasmic translation"/>
    <property type="evidence" value="ECO:0000318"/>
    <property type="project" value="GO_Central"/>
</dbReference>
<dbReference type="GO" id="GO:0000028">
    <property type="term" value="P:ribosomal small subunit assembly"/>
    <property type="evidence" value="ECO:0000318"/>
    <property type="project" value="GO_Central"/>
</dbReference>
<dbReference type="CDD" id="cd01425">
    <property type="entry name" value="RPS2"/>
    <property type="match status" value="1"/>
</dbReference>
<dbReference type="FunFam" id="3.40.50.10490:FF:000030">
    <property type="entry name" value="30S ribosomal protein S2"/>
    <property type="match status" value="1"/>
</dbReference>
<dbReference type="Gene3D" id="3.40.50.10490">
    <property type="entry name" value="Glucose-6-phosphate isomerase like protein, domain 1"/>
    <property type="match status" value="1"/>
</dbReference>
<dbReference type="InterPro" id="IPR001865">
    <property type="entry name" value="Ribosomal_uS2"/>
</dbReference>
<dbReference type="InterPro" id="IPR018130">
    <property type="entry name" value="Ribosomal_uS2_CS"/>
</dbReference>
<dbReference type="InterPro" id="IPR005707">
    <property type="entry name" value="Ribosomal_uS2_euk/arc"/>
</dbReference>
<dbReference type="InterPro" id="IPR023591">
    <property type="entry name" value="Ribosomal_uS2_flav_dom_sf"/>
</dbReference>
<dbReference type="PANTHER" id="PTHR11489">
    <property type="entry name" value="40S RIBOSOMAL PROTEIN SA"/>
    <property type="match status" value="1"/>
</dbReference>
<dbReference type="Pfam" id="PF00318">
    <property type="entry name" value="Ribosomal_S2"/>
    <property type="match status" value="1"/>
</dbReference>
<dbReference type="PRINTS" id="PR00395">
    <property type="entry name" value="RIBOSOMALS2"/>
</dbReference>
<dbReference type="SUPFAM" id="SSF52313">
    <property type="entry name" value="Ribosomal protein S2"/>
    <property type="match status" value="1"/>
</dbReference>
<dbReference type="PROSITE" id="PS00963">
    <property type="entry name" value="RIBOSOMAL_S2_2"/>
    <property type="match status" value="1"/>
</dbReference>
<sequence length="264" mass="28141">SSRPYGQRAVLKFGAHTGATPVAGRYTPGTFTNQIQAAFREPRILIVTDPRSDHQPVTEASYVNIPVIALCNSDSPLRHVDIAIPCNNKSIHSIGLMWWMLSREVLRLRGAISRDVTWEIMVDLYFFRDPEEAEKEEQEARDRAVAVKEEPAQPYAEQWGSDPVAVPAGGQPVGVPDVTDWAADANKVAGAPAPPQQQWANDASKVAAPAAAPAAFPSEDWGSVDAPAAPVAPAAAAPAAAAPSQDWSTDDWGGAATNDWAVSS</sequence>
<keyword id="KW-0963">Cytoplasm</keyword>
<keyword id="KW-1185">Reference proteome</keyword>
<keyword id="KW-0687">Ribonucleoprotein</keyword>
<keyword id="KW-0689">Ribosomal protein</keyword>
<feature type="chain" id="PRO_0000134355" description="Small ribosomal subunit protein uS2">
    <location>
        <begin position="1" status="less than"/>
        <end position="264"/>
    </location>
</feature>
<feature type="region of interest" description="Disordered" evidence="2">
    <location>
        <begin position="147"/>
        <end position="176"/>
    </location>
</feature>
<feature type="region of interest" description="Disordered" evidence="2">
    <location>
        <begin position="188"/>
        <end position="264"/>
    </location>
</feature>
<feature type="compositionally biased region" description="Low complexity" evidence="2">
    <location>
        <begin position="162"/>
        <end position="176"/>
    </location>
</feature>
<feature type="compositionally biased region" description="Low complexity" evidence="2">
    <location>
        <begin position="226"/>
        <end position="243"/>
    </location>
</feature>
<feature type="non-terminal residue">
    <location>
        <position position="1"/>
    </location>
</feature>
<proteinExistence type="evidence at transcript level"/>
<protein>
    <recommendedName>
        <fullName evidence="3">Small ribosomal subunit protein uS2</fullName>
    </recommendedName>
    <alternativeName>
        <fullName>40S ribosomal protein SA</fullName>
    </alternativeName>
    <alternativeName>
        <fullName>Laminin-binding protein p40</fullName>
        <shortName>LBP/p40</shortName>
    </alternativeName>
</protein>
<reference key="1">
    <citation type="journal article" date="1995" name="Exp. Cell Res.">
        <title>Characterization and localized expression of the laminin binding protein/p40 (LBP/p40) gene during sea urchin development.</title>
        <authorList>
            <person name="Hung M."/>
            <person name="Rosenthal E.T."/>
            <person name="Boblett B."/>
            <person name="Benson S."/>
        </authorList>
    </citation>
    <scope>NUCLEOTIDE SEQUENCE [MRNA]</scope>
</reference>
<evidence type="ECO:0000250" key="1"/>
<evidence type="ECO:0000256" key="2">
    <source>
        <dbReference type="SAM" id="MobiDB-lite"/>
    </source>
</evidence>
<evidence type="ECO:0000305" key="3"/>